<sequence length="380" mass="40365">MVSSVLRDARRIVVKVGSSLVTNEGRGLDEVAIGEWCRQLAALVRGQGGEPREVIMVSSGAIAEGMKRLGWSSRPGEIHELQAAAAVGQMGLAQMYETKLREQSMGSAQVLLTHADLADRERYLNARSTLLTLLRLGVVPVINENDTVVTDEIKFGDNDTLGALVANLVEADALVILTDQKGLYTADPRRDPQAQFVHEAQAGDAALEAMAGGAGSSIGKGGMITKILAAKRAAGSGASTVIAWGREPDVLLRLARGESIGTLLVAQTQKNQARKQWMVDHLQLRGSVTVDAGAAAKLREDGKSLLPIGMVAVEGDFVRGDVIAVRDAGGTEIARGLANYASAEARLLCRKPSAEFERLLGYAAEPEMVHRDNMVVLGAR</sequence>
<dbReference type="EC" id="2.7.2.11" evidence="1"/>
<dbReference type="EMBL" id="CP001392">
    <property type="protein sequence ID" value="ACM32252.1"/>
    <property type="molecule type" value="Genomic_DNA"/>
</dbReference>
<dbReference type="RefSeq" id="WP_012655755.1">
    <property type="nucleotide sequence ID" value="NC_011992.1"/>
</dbReference>
<dbReference type="SMR" id="B9MDZ8"/>
<dbReference type="KEGG" id="dia:Dtpsy_0773"/>
<dbReference type="eggNOG" id="COG0263">
    <property type="taxonomic scope" value="Bacteria"/>
</dbReference>
<dbReference type="HOGENOM" id="CLU_025400_2_0_4"/>
<dbReference type="UniPathway" id="UPA00098">
    <property type="reaction ID" value="UER00359"/>
</dbReference>
<dbReference type="Proteomes" id="UP000000450">
    <property type="component" value="Chromosome"/>
</dbReference>
<dbReference type="GO" id="GO:0005829">
    <property type="term" value="C:cytosol"/>
    <property type="evidence" value="ECO:0007669"/>
    <property type="project" value="TreeGrafter"/>
</dbReference>
<dbReference type="GO" id="GO:0005524">
    <property type="term" value="F:ATP binding"/>
    <property type="evidence" value="ECO:0007669"/>
    <property type="project" value="UniProtKB-KW"/>
</dbReference>
<dbReference type="GO" id="GO:0004349">
    <property type="term" value="F:glutamate 5-kinase activity"/>
    <property type="evidence" value="ECO:0007669"/>
    <property type="project" value="UniProtKB-UniRule"/>
</dbReference>
<dbReference type="GO" id="GO:0003723">
    <property type="term" value="F:RNA binding"/>
    <property type="evidence" value="ECO:0007669"/>
    <property type="project" value="InterPro"/>
</dbReference>
<dbReference type="GO" id="GO:0055129">
    <property type="term" value="P:L-proline biosynthetic process"/>
    <property type="evidence" value="ECO:0007669"/>
    <property type="project" value="UniProtKB-UniRule"/>
</dbReference>
<dbReference type="CDD" id="cd04242">
    <property type="entry name" value="AAK_G5K_ProB"/>
    <property type="match status" value="1"/>
</dbReference>
<dbReference type="CDD" id="cd21157">
    <property type="entry name" value="PUA_G5K"/>
    <property type="match status" value="1"/>
</dbReference>
<dbReference type="FunFam" id="3.40.1160.10:FF:000018">
    <property type="entry name" value="Glutamate 5-kinase"/>
    <property type="match status" value="1"/>
</dbReference>
<dbReference type="Gene3D" id="3.40.1160.10">
    <property type="entry name" value="Acetylglutamate kinase-like"/>
    <property type="match status" value="1"/>
</dbReference>
<dbReference type="Gene3D" id="2.30.130.10">
    <property type="entry name" value="PUA domain"/>
    <property type="match status" value="1"/>
</dbReference>
<dbReference type="HAMAP" id="MF_00456">
    <property type="entry name" value="ProB"/>
    <property type="match status" value="1"/>
</dbReference>
<dbReference type="InterPro" id="IPR036393">
    <property type="entry name" value="AceGlu_kinase-like_sf"/>
</dbReference>
<dbReference type="InterPro" id="IPR001048">
    <property type="entry name" value="Asp/Glu/Uridylate_kinase"/>
</dbReference>
<dbReference type="InterPro" id="IPR041739">
    <property type="entry name" value="G5K_ProB"/>
</dbReference>
<dbReference type="InterPro" id="IPR001057">
    <property type="entry name" value="Glu/AcGlu_kinase"/>
</dbReference>
<dbReference type="InterPro" id="IPR011529">
    <property type="entry name" value="Glu_5kinase"/>
</dbReference>
<dbReference type="InterPro" id="IPR005715">
    <property type="entry name" value="Glu_5kinase/COase_Synthase"/>
</dbReference>
<dbReference type="InterPro" id="IPR019797">
    <property type="entry name" value="Glutamate_5-kinase_CS"/>
</dbReference>
<dbReference type="InterPro" id="IPR002478">
    <property type="entry name" value="PUA"/>
</dbReference>
<dbReference type="InterPro" id="IPR015947">
    <property type="entry name" value="PUA-like_sf"/>
</dbReference>
<dbReference type="InterPro" id="IPR036974">
    <property type="entry name" value="PUA_sf"/>
</dbReference>
<dbReference type="NCBIfam" id="TIGR01027">
    <property type="entry name" value="proB"/>
    <property type="match status" value="1"/>
</dbReference>
<dbReference type="PANTHER" id="PTHR43654">
    <property type="entry name" value="GLUTAMATE 5-KINASE"/>
    <property type="match status" value="1"/>
</dbReference>
<dbReference type="PANTHER" id="PTHR43654:SF1">
    <property type="entry name" value="ISOPENTENYL PHOSPHATE KINASE"/>
    <property type="match status" value="1"/>
</dbReference>
<dbReference type="Pfam" id="PF00696">
    <property type="entry name" value="AA_kinase"/>
    <property type="match status" value="1"/>
</dbReference>
<dbReference type="Pfam" id="PF01472">
    <property type="entry name" value="PUA"/>
    <property type="match status" value="1"/>
</dbReference>
<dbReference type="PIRSF" id="PIRSF000729">
    <property type="entry name" value="GK"/>
    <property type="match status" value="1"/>
</dbReference>
<dbReference type="PRINTS" id="PR00474">
    <property type="entry name" value="GLU5KINASE"/>
</dbReference>
<dbReference type="SMART" id="SM00359">
    <property type="entry name" value="PUA"/>
    <property type="match status" value="1"/>
</dbReference>
<dbReference type="SUPFAM" id="SSF53633">
    <property type="entry name" value="Carbamate kinase-like"/>
    <property type="match status" value="1"/>
</dbReference>
<dbReference type="SUPFAM" id="SSF88697">
    <property type="entry name" value="PUA domain-like"/>
    <property type="match status" value="1"/>
</dbReference>
<dbReference type="PROSITE" id="PS00902">
    <property type="entry name" value="GLUTAMATE_5_KINASE"/>
    <property type="match status" value="1"/>
</dbReference>
<dbReference type="PROSITE" id="PS50890">
    <property type="entry name" value="PUA"/>
    <property type="match status" value="1"/>
</dbReference>
<feature type="chain" id="PRO_1000193692" description="Glutamate 5-kinase">
    <location>
        <begin position="1"/>
        <end position="380"/>
    </location>
</feature>
<feature type="domain" description="PUA" evidence="1">
    <location>
        <begin position="285"/>
        <end position="363"/>
    </location>
</feature>
<feature type="binding site" evidence="1">
    <location>
        <position position="15"/>
    </location>
    <ligand>
        <name>ATP</name>
        <dbReference type="ChEBI" id="CHEBI:30616"/>
    </ligand>
</feature>
<feature type="binding site" evidence="1">
    <location>
        <position position="59"/>
    </location>
    <ligand>
        <name>substrate</name>
    </ligand>
</feature>
<feature type="binding site" evidence="1">
    <location>
        <position position="146"/>
    </location>
    <ligand>
        <name>substrate</name>
    </ligand>
</feature>
<feature type="binding site" evidence="1">
    <location>
        <position position="158"/>
    </location>
    <ligand>
        <name>substrate</name>
    </ligand>
</feature>
<feature type="binding site" evidence="1">
    <location>
        <begin position="178"/>
        <end position="179"/>
    </location>
    <ligand>
        <name>ATP</name>
        <dbReference type="ChEBI" id="CHEBI:30616"/>
    </ligand>
</feature>
<organism>
    <name type="scientific">Acidovorax ebreus (strain TPSY)</name>
    <name type="common">Diaphorobacter sp. (strain TPSY)</name>
    <dbReference type="NCBI Taxonomy" id="535289"/>
    <lineage>
        <taxon>Bacteria</taxon>
        <taxon>Pseudomonadati</taxon>
        <taxon>Pseudomonadota</taxon>
        <taxon>Betaproteobacteria</taxon>
        <taxon>Burkholderiales</taxon>
        <taxon>Comamonadaceae</taxon>
        <taxon>Diaphorobacter</taxon>
    </lineage>
</organism>
<gene>
    <name evidence="1" type="primary">proB</name>
    <name type="ordered locus">Dtpsy_0773</name>
</gene>
<keyword id="KW-0028">Amino-acid biosynthesis</keyword>
<keyword id="KW-0067">ATP-binding</keyword>
<keyword id="KW-0963">Cytoplasm</keyword>
<keyword id="KW-0418">Kinase</keyword>
<keyword id="KW-0547">Nucleotide-binding</keyword>
<keyword id="KW-0641">Proline biosynthesis</keyword>
<keyword id="KW-1185">Reference proteome</keyword>
<keyword id="KW-0808">Transferase</keyword>
<comment type="function">
    <text evidence="1">Catalyzes the transfer of a phosphate group to glutamate to form L-glutamate 5-phosphate.</text>
</comment>
<comment type="catalytic activity">
    <reaction evidence="1">
        <text>L-glutamate + ATP = L-glutamyl 5-phosphate + ADP</text>
        <dbReference type="Rhea" id="RHEA:14877"/>
        <dbReference type="ChEBI" id="CHEBI:29985"/>
        <dbReference type="ChEBI" id="CHEBI:30616"/>
        <dbReference type="ChEBI" id="CHEBI:58274"/>
        <dbReference type="ChEBI" id="CHEBI:456216"/>
        <dbReference type="EC" id="2.7.2.11"/>
    </reaction>
</comment>
<comment type="pathway">
    <text evidence="1">Amino-acid biosynthesis; L-proline biosynthesis; L-glutamate 5-semialdehyde from L-glutamate: step 1/2.</text>
</comment>
<comment type="subcellular location">
    <subcellularLocation>
        <location evidence="1">Cytoplasm</location>
    </subcellularLocation>
</comment>
<comment type="similarity">
    <text evidence="1">Belongs to the glutamate 5-kinase family.</text>
</comment>
<protein>
    <recommendedName>
        <fullName evidence="1">Glutamate 5-kinase</fullName>
        <ecNumber evidence="1">2.7.2.11</ecNumber>
    </recommendedName>
    <alternativeName>
        <fullName evidence="1">Gamma-glutamyl kinase</fullName>
        <shortName evidence="1">GK</shortName>
    </alternativeName>
</protein>
<reference key="1">
    <citation type="submission" date="2009-01" db="EMBL/GenBank/DDBJ databases">
        <title>Complete sequence of Diaphorobacter sp. TPSY.</title>
        <authorList>
            <consortium name="US DOE Joint Genome Institute"/>
            <person name="Lucas S."/>
            <person name="Copeland A."/>
            <person name="Lapidus A."/>
            <person name="Glavina del Rio T."/>
            <person name="Tice H."/>
            <person name="Bruce D."/>
            <person name="Goodwin L."/>
            <person name="Pitluck S."/>
            <person name="Chertkov O."/>
            <person name="Brettin T."/>
            <person name="Detter J.C."/>
            <person name="Han C."/>
            <person name="Larimer F."/>
            <person name="Land M."/>
            <person name="Hauser L."/>
            <person name="Kyrpides N."/>
            <person name="Mikhailova N."/>
            <person name="Coates J.D."/>
        </authorList>
    </citation>
    <scope>NUCLEOTIDE SEQUENCE [LARGE SCALE GENOMIC DNA]</scope>
    <source>
        <strain>TPSY</strain>
    </source>
</reference>
<proteinExistence type="inferred from homology"/>
<accession>B9MDZ8</accession>
<name>PROB_ACIET</name>
<evidence type="ECO:0000255" key="1">
    <source>
        <dbReference type="HAMAP-Rule" id="MF_00456"/>
    </source>
</evidence>